<accession>Q5REH8</accession>
<proteinExistence type="inferred from homology"/>
<feature type="initiator methionine" description="Removed" evidence="1">
    <location>
        <position position="1"/>
    </location>
</feature>
<feature type="chain" id="PRO_0000089818" description="Anaphase-promoting complex subunit 16">
    <location>
        <begin position="2"/>
        <end position="110"/>
    </location>
</feature>
<feature type="region of interest" description="Disordered" evidence="2">
    <location>
        <begin position="1"/>
        <end position="29"/>
    </location>
</feature>
<feature type="compositionally biased region" description="Low complexity" evidence="2">
    <location>
        <begin position="1"/>
        <end position="26"/>
    </location>
</feature>
<feature type="modified residue" description="N-acetylalanine" evidence="1">
    <location>
        <position position="2"/>
    </location>
</feature>
<keyword id="KW-0007">Acetylation</keyword>
<keyword id="KW-0131">Cell cycle</keyword>
<keyword id="KW-0132">Cell division</keyword>
<keyword id="KW-0137">Centromere</keyword>
<keyword id="KW-0158">Chromosome</keyword>
<keyword id="KW-0963">Cytoplasm</keyword>
<keyword id="KW-0995">Kinetochore</keyword>
<keyword id="KW-0498">Mitosis</keyword>
<keyword id="KW-0539">Nucleus</keyword>
<keyword id="KW-1185">Reference proteome</keyword>
<keyword id="KW-0833">Ubl conjugation pathway</keyword>
<organism>
    <name type="scientific">Pongo abelii</name>
    <name type="common">Sumatran orangutan</name>
    <name type="synonym">Pongo pygmaeus abelii</name>
    <dbReference type="NCBI Taxonomy" id="9601"/>
    <lineage>
        <taxon>Eukaryota</taxon>
        <taxon>Metazoa</taxon>
        <taxon>Chordata</taxon>
        <taxon>Craniata</taxon>
        <taxon>Vertebrata</taxon>
        <taxon>Euteleostomi</taxon>
        <taxon>Mammalia</taxon>
        <taxon>Eutheria</taxon>
        <taxon>Euarchontoglires</taxon>
        <taxon>Primates</taxon>
        <taxon>Haplorrhini</taxon>
        <taxon>Catarrhini</taxon>
        <taxon>Hominidae</taxon>
        <taxon>Pongo</taxon>
    </lineage>
</organism>
<evidence type="ECO:0000250" key="1">
    <source>
        <dbReference type="UniProtKB" id="Q96DE5"/>
    </source>
</evidence>
<evidence type="ECO:0000256" key="2">
    <source>
        <dbReference type="SAM" id="MobiDB-lite"/>
    </source>
</evidence>
<evidence type="ECO:0000305" key="3"/>
<sequence>MAASSSSSSAGGVSGSSVTGSGFSVSDLAPPRKALFTYPKGAGEMLEDGSERFLCESVFSYQVASTLKQVKHDQQVARMEKLAGLVEELEADEWRFKPIEQLLGFTPSSG</sequence>
<comment type="function">
    <text evidence="1">Component of the anaphase promoting complex/cyclosome (APC/C), a cell cycle-regulated E3 ubiquitin ligase that controls progression through mitosis and the G1 phase of the cell cycle. The APC/C complex acts by mediating ubiquitination and subsequent degradation of target proteins: it mainly mediates the formation of 'Lys-11'-linked polyubiquitin chains and, to a lower extent, the formation of 'Lys-48'- and 'Lys-63'-linked polyubiquitin chains. The APC/C complex catalyzes assembly of branched 'Lys-11'-/'Lys-48'-linked branched ubiquitin chains on target proteins.</text>
</comment>
<comment type="pathway">
    <text evidence="1">Protein modification; protein ubiquitination.</text>
</comment>
<comment type="subunit">
    <text evidence="1">The mammalian APC/C is composed at least of 14 distinct subunits ANAPC1, ANAPC2, CDC27/APC3, ANAPC4, ANAPC5, CDC16/APC6, ANAPC7, CDC23/APC8, ANAPC10, ANAPC11, CDC26/APC12, ANAPC13, ANAPC15 and ANAPC16 that assemble into a complex of at least 19 chains with a combined molecular mass of around 1.2 MDa; APC/C interacts with FZR1 and FBXO5. ANAPC16 associates with the rest of the complex independently of ANAPC2 and ANAPC11.</text>
</comment>
<comment type="subcellular location">
    <subcellularLocation>
        <location evidence="1">Cytoplasm</location>
    </subcellularLocation>
    <subcellularLocation>
        <location evidence="1">Nucleus</location>
    </subcellularLocation>
    <subcellularLocation>
        <location evidence="1">Chromosome</location>
        <location evidence="1">Centromere</location>
        <location evidence="1">Kinetochore</location>
    </subcellularLocation>
</comment>
<comment type="similarity">
    <text evidence="3">Belongs to the APC16 family.</text>
</comment>
<gene>
    <name type="primary">ANAPC16</name>
</gene>
<dbReference type="EMBL" id="CR857550">
    <property type="protein sequence ID" value="CAH89829.1"/>
    <property type="molecule type" value="mRNA"/>
</dbReference>
<dbReference type="RefSeq" id="NP_001124848.1">
    <property type="nucleotide sequence ID" value="NM_001131376.1"/>
</dbReference>
<dbReference type="RefSeq" id="XP_009243772.1">
    <property type="nucleotide sequence ID" value="XM_009245497.1"/>
</dbReference>
<dbReference type="RefSeq" id="XP_054377350.1">
    <property type="nucleotide sequence ID" value="XM_054521375.1"/>
</dbReference>
<dbReference type="SMR" id="Q5REH8"/>
<dbReference type="FunCoup" id="Q5REH8">
    <property type="interactions" value="1596"/>
</dbReference>
<dbReference type="STRING" id="9601.ENSPPYP00000023872"/>
<dbReference type="Ensembl" id="ENSPPYT00000002827.2">
    <property type="protein sequence ID" value="ENSPPYP00000002734.1"/>
    <property type="gene ID" value="ENSPPYG00000002355.3"/>
</dbReference>
<dbReference type="GeneID" id="100171709"/>
<dbReference type="KEGG" id="pon:100171709"/>
<dbReference type="CTD" id="119504"/>
<dbReference type="eggNOG" id="ENOG502RZ50">
    <property type="taxonomic scope" value="Eukaryota"/>
</dbReference>
<dbReference type="GeneTree" id="ENSGT00390000018109"/>
<dbReference type="HOGENOM" id="CLU_153312_0_0_1"/>
<dbReference type="InParanoid" id="Q5REH8"/>
<dbReference type="OMA" id="GASRRCH"/>
<dbReference type="OrthoDB" id="6374621at2759"/>
<dbReference type="TreeFam" id="TF332754"/>
<dbReference type="UniPathway" id="UPA00143"/>
<dbReference type="Proteomes" id="UP000001595">
    <property type="component" value="Chromosome 10"/>
</dbReference>
<dbReference type="GO" id="GO:0005680">
    <property type="term" value="C:anaphase-promoting complex"/>
    <property type="evidence" value="ECO:0000250"/>
    <property type="project" value="UniProtKB"/>
</dbReference>
<dbReference type="GO" id="GO:0005829">
    <property type="term" value="C:cytosol"/>
    <property type="evidence" value="ECO:0007669"/>
    <property type="project" value="Ensembl"/>
</dbReference>
<dbReference type="GO" id="GO:0000776">
    <property type="term" value="C:kinetochore"/>
    <property type="evidence" value="ECO:0000250"/>
    <property type="project" value="UniProtKB"/>
</dbReference>
<dbReference type="GO" id="GO:0031145">
    <property type="term" value="P:anaphase-promoting complex-dependent catabolic process"/>
    <property type="evidence" value="ECO:0000250"/>
    <property type="project" value="UniProtKB"/>
</dbReference>
<dbReference type="GO" id="GO:0051301">
    <property type="term" value="P:cell division"/>
    <property type="evidence" value="ECO:0007669"/>
    <property type="project" value="UniProtKB-KW"/>
</dbReference>
<dbReference type="GO" id="GO:0141198">
    <property type="term" value="P:protein branched polyubiquitination"/>
    <property type="evidence" value="ECO:0000250"/>
    <property type="project" value="UniProtKB"/>
</dbReference>
<dbReference type="GO" id="GO:0070979">
    <property type="term" value="P:protein K11-linked ubiquitination"/>
    <property type="evidence" value="ECO:0000250"/>
    <property type="project" value="UniProtKB"/>
</dbReference>
<dbReference type="GO" id="GO:0070936">
    <property type="term" value="P:protein K48-linked ubiquitination"/>
    <property type="evidence" value="ECO:0000250"/>
    <property type="project" value="UniProtKB"/>
</dbReference>
<dbReference type="GO" id="GO:0016567">
    <property type="term" value="P:protein ubiquitination"/>
    <property type="evidence" value="ECO:0000250"/>
    <property type="project" value="UniProtKB"/>
</dbReference>
<dbReference type="InterPro" id="IPR029641">
    <property type="entry name" value="APC16"/>
</dbReference>
<dbReference type="PANTHER" id="PTHR31564">
    <property type="entry name" value="ANAPHASE-PROMOTING COMPLEX SUBUNIT 16"/>
    <property type="match status" value="1"/>
</dbReference>
<dbReference type="PANTHER" id="PTHR31564:SF0">
    <property type="entry name" value="ANAPHASE-PROMOTING COMPLEX SUBUNIT 16"/>
    <property type="match status" value="1"/>
</dbReference>
<dbReference type="Pfam" id="PF17256">
    <property type="entry name" value="ANAPC16"/>
    <property type="match status" value="1"/>
</dbReference>
<protein>
    <recommendedName>
        <fullName>Anaphase-promoting complex subunit 16</fullName>
        <shortName>APC16</shortName>
    </recommendedName>
    <alternativeName>
        <fullName>Cyclosome subunit 16</fullName>
    </alternativeName>
</protein>
<reference key="1">
    <citation type="submission" date="2004-11" db="EMBL/GenBank/DDBJ databases">
        <authorList>
            <consortium name="The German cDNA consortium"/>
        </authorList>
    </citation>
    <scope>NUCLEOTIDE SEQUENCE [LARGE SCALE MRNA]</scope>
    <source>
        <tissue>Kidney</tissue>
    </source>
</reference>
<name>APC16_PONAB</name>